<organism>
    <name type="scientific">Shewanella baltica (strain OS155 / ATCC BAA-1091)</name>
    <dbReference type="NCBI Taxonomy" id="325240"/>
    <lineage>
        <taxon>Bacteria</taxon>
        <taxon>Pseudomonadati</taxon>
        <taxon>Pseudomonadota</taxon>
        <taxon>Gammaproteobacteria</taxon>
        <taxon>Alteromonadales</taxon>
        <taxon>Shewanellaceae</taxon>
        <taxon>Shewanella</taxon>
    </lineage>
</organism>
<protein>
    <recommendedName>
        <fullName evidence="1">Adenosylcobinamide-GDP ribazoletransferase</fullName>
        <ecNumber evidence="1">2.7.8.26</ecNumber>
    </recommendedName>
    <alternativeName>
        <fullName evidence="1">Cobalamin synthase</fullName>
    </alternativeName>
    <alternativeName>
        <fullName evidence="1">Cobalamin-5'-phosphate synthase</fullName>
    </alternativeName>
</protein>
<accession>A3D7X7</accession>
<sequence length="262" mass="28681">MSERESWHKEIDLFLVAMGYFTRIPMPKWVEADSDKLNKASRYFGLVGLLVGLLSAIVFWLTQNWLPAGVSVLLAMLVGVLLTGGFHEDGLADTFDGFGGGWTAEDKLRIMKDSRLGSYGALALMLALLLKWQLLVELALYDPVVAGSALIVAHTVSRMVSASIIFSEKYVRDDETSKSKPLSQHQGINELLILIASGVLVLLFLKGLAALSLLLVMIGLRRLIIVIFRRQIGGYTGDTLGAAQQIAEIVCYFVLLVVGNIL</sequence>
<keyword id="KW-0997">Cell inner membrane</keyword>
<keyword id="KW-1003">Cell membrane</keyword>
<keyword id="KW-0169">Cobalamin biosynthesis</keyword>
<keyword id="KW-0460">Magnesium</keyword>
<keyword id="KW-0472">Membrane</keyword>
<keyword id="KW-1185">Reference proteome</keyword>
<keyword id="KW-0808">Transferase</keyword>
<keyword id="KW-0812">Transmembrane</keyword>
<keyword id="KW-1133">Transmembrane helix</keyword>
<reference key="1">
    <citation type="submission" date="2007-02" db="EMBL/GenBank/DDBJ databases">
        <title>Complete sequence of chromosome of Shewanella baltica OS155.</title>
        <authorList>
            <consortium name="US DOE Joint Genome Institute"/>
            <person name="Copeland A."/>
            <person name="Lucas S."/>
            <person name="Lapidus A."/>
            <person name="Barry K."/>
            <person name="Detter J.C."/>
            <person name="Glavina del Rio T."/>
            <person name="Hammon N."/>
            <person name="Israni S."/>
            <person name="Dalin E."/>
            <person name="Tice H."/>
            <person name="Pitluck S."/>
            <person name="Sims D.R."/>
            <person name="Brettin T."/>
            <person name="Bruce D."/>
            <person name="Han C."/>
            <person name="Tapia R."/>
            <person name="Brainard J."/>
            <person name="Schmutz J."/>
            <person name="Larimer F."/>
            <person name="Land M."/>
            <person name="Hauser L."/>
            <person name="Kyrpides N."/>
            <person name="Mikhailova N."/>
            <person name="Brettar I."/>
            <person name="Klappenbach J."/>
            <person name="Konstantinidis K."/>
            <person name="Rodrigues J."/>
            <person name="Tiedje J."/>
            <person name="Richardson P."/>
        </authorList>
    </citation>
    <scope>NUCLEOTIDE SEQUENCE [LARGE SCALE GENOMIC DNA]</scope>
    <source>
        <strain>OS155 / ATCC BAA-1091</strain>
    </source>
</reference>
<dbReference type="EC" id="2.7.8.26" evidence="1"/>
<dbReference type="EMBL" id="CP000563">
    <property type="protein sequence ID" value="ABN62840.1"/>
    <property type="molecule type" value="Genomic_DNA"/>
</dbReference>
<dbReference type="RefSeq" id="WP_011847601.1">
    <property type="nucleotide sequence ID" value="NC_009052.1"/>
</dbReference>
<dbReference type="STRING" id="325240.Sbal_3363"/>
<dbReference type="KEGG" id="sbl:Sbal_3363"/>
<dbReference type="HOGENOM" id="CLU_057426_1_1_6"/>
<dbReference type="OrthoDB" id="9794626at2"/>
<dbReference type="UniPathway" id="UPA00148">
    <property type="reaction ID" value="UER00238"/>
</dbReference>
<dbReference type="Proteomes" id="UP000001557">
    <property type="component" value="Chromosome"/>
</dbReference>
<dbReference type="GO" id="GO:0005886">
    <property type="term" value="C:plasma membrane"/>
    <property type="evidence" value="ECO:0007669"/>
    <property type="project" value="UniProtKB-SubCell"/>
</dbReference>
<dbReference type="GO" id="GO:0051073">
    <property type="term" value="F:adenosylcobinamide-GDP ribazoletransferase activity"/>
    <property type="evidence" value="ECO:0007669"/>
    <property type="project" value="UniProtKB-UniRule"/>
</dbReference>
<dbReference type="GO" id="GO:0008818">
    <property type="term" value="F:cobalamin 5'-phosphate synthase activity"/>
    <property type="evidence" value="ECO:0007669"/>
    <property type="project" value="UniProtKB-UniRule"/>
</dbReference>
<dbReference type="GO" id="GO:0009236">
    <property type="term" value="P:cobalamin biosynthetic process"/>
    <property type="evidence" value="ECO:0007669"/>
    <property type="project" value="UniProtKB-UniRule"/>
</dbReference>
<dbReference type="HAMAP" id="MF_00719">
    <property type="entry name" value="CobS"/>
    <property type="match status" value="1"/>
</dbReference>
<dbReference type="InterPro" id="IPR003805">
    <property type="entry name" value="CobS"/>
</dbReference>
<dbReference type="NCBIfam" id="TIGR00317">
    <property type="entry name" value="cobS"/>
    <property type="match status" value="1"/>
</dbReference>
<dbReference type="NCBIfam" id="NF001277">
    <property type="entry name" value="PRK00235.1-3"/>
    <property type="match status" value="1"/>
</dbReference>
<dbReference type="PANTHER" id="PTHR34148">
    <property type="entry name" value="ADENOSYLCOBINAMIDE-GDP RIBAZOLETRANSFERASE"/>
    <property type="match status" value="1"/>
</dbReference>
<dbReference type="PANTHER" id="PTHR34148:SF1">
    <property type="entry name" value="ADENOSYLCOBINAMIDE-GDP RIBAZOLETRANSFERASE"/>
    <property type="match status" value="1"/>
</dbReference>
<dbReference type="Pfam" id="PF02654">
    <property type="entry name" value="CobS"/>
    <property type="match status" value="1"/>
</dbReference>
<gene>
    <name evidence="1" type="primary">cobS</name>
    <name type="ordered locus">Sbal_3363</name>
</gene>
<feature type="chain" id="PRO_1000045802" description="Adenosylcobinamide-GDP ribazoletransferase">
    <location>
        <begin position="1"/>
        <end position="262"/>
    </location>
</feature>
<feature type="transmembrane region" description="Helical" evidence="1">
    <location>
        <begin position="43"/>
        <end position="63"/>
    </location>
</feature>
<feature type="transmembrane region" description="Helical" evidence="1">
    <location>
        <begin position="66"/>
        <end position="86"/>
    </location>
</feature>
<feature type="transmembrane region" description="Helical" evidence="1">
    <location>
        <begin position="120"/>
        <end position="140"/>
    </location>
</feature>
<feature type="transmembrane region" description="Helical" evidence="1">
    <location>
        <begin position="146"/>
        <end position="166"/>
    </location>
</feature>
<feature type="transmembrane region" description="Helical" evidence="1">
    <location>
        <begin position="191"/>
        <end position="211"/>
    </location>
</feature>
<feature type="transmembrane region" description="Helical" evidence="1">
    <location>
        <begin position="242"/>
        <end position="262"/>
    </location>
</feature>
<name>COBS_SHEB5</name>
<evidence type="ECO:0000255" key="1">
    <source>
        <dbReference type="HAMAP-Rule" id="MF_00719"/>
    </source>
</evidence>
<comment type="function">
    <text evidence="1">Joins adenosylcobinamide-GDP and alpha-ribazole to generate adenosylcobalamin (Ado-cobalamin). Also synthesizes adenosylcobalamin 5'-phosphate from adenosylcobinamide-GDP and alpha-ribazole 5'-phosphate.</text>
</comment>
<comment type="catalytic activity">
    <reaction evidence="1">
        <text>alpha-ribazole + adenosylcob(III)inamide-GDP = adenosylcob(III)alamin + GMP + H(+)</text>
        <dbReference type="Rhea" id="RHEA:16049"/>
        <dbReference type="ChEBI" id="CHEBI:10329"/>
        <dbReference type="ChEBI" id="CHEBI:15378"/>
        <dbReference type="ChEBI" id="CHEBI:18408"/>
        <dbReference type="ChEBI" id="CHEBI:58115"/>
        <dbReference type="ChEBI" id="CHEBI:60487"/>
        <dbReference type="EC" id="2.7.8.26"/>
    </reaction>
</comment>
<comment type="catalytic activity">
    <reaction evidence="1">
        <text>alpha-ribazole 5'-phosphate + adenosylcob(III)inamide-GDP = adenosylcob(III)alamin 5'-phosphate + GMP + H(+)</text>
        <dbReference type="Rhea" id="RHEA:23560"/>
        <dbReference type="ChEBI" id="CHEBI:15378"/>
        <dbReference type="ChEBI" id="CHEBI:57918"/>
        <dbReference type="ChEBI" id="CHEBI:58115"/>
        <dbReference type="ChEBI" id="CHEBI:60487"/>
        <dbReference type="ChEBI" id="CHEBI:60493"/>
        <dbReference type="EC" id="2.7.8.26"/>
    </reaction>
</comment>
<comment type="cofactor">
    <cofactor evidence="1">
        <name>Mg(2+)</name>
        <dbReference type="ChEBI" id="CHEBI:18420"/>
    </cofactor>
</comment>
<comment type="pathway">
    <text evidence="1">Cofactor biosynthesis; adenosylcobalamin biosynthesis; adenosylcobalamin from cob(II)yrinate a,c-diamide: step 7/7.</text>
</comment>
<comment type="subcellular location">
    <subcellularLocation>
        <location evidence="1">Cell inner membrane</location>
        <topology evidence="1">Multi-pass membrane protein</topology>
    </subcellularLocation>
</comment>
<comment type="similarity">
    <text evidence="1">Belongs to the CobS family.</text>
</comment>
<proteinExistence type="inferred from homology"/>